<protein>
    <recommendedName>
        <fullName evidence="1">Ribose-5-phosphate isomerase A</fullName>
        <ecNumber evidence="1">5.3.1.6</ecNumber>
    </recommendedName>
    <alternativeName>
        <fullName evidence="1">Phosphoriboisomerase A</fullName>
        <shortName evidence="1">PRI</shortName>
    </alternativeName>
</protein>
<name>RPIA_SHEPC</name>
<feature type="chain" id="PRO_1000016992" description="Ribose-5-phosphate isomerase A">
    <location>
        <begin position="1"/>
        <end position="220"/>
    </location>
</feature>
<feature type="active site" description="Proton acceptor" evidence="1">
    <location>
        <position position="103"/>
    </location>
</feature>
<feature type="binding site" evidence="1">
    <location>
        <begin position="28"/>
        <end position="31"/>
    </location>
    <ligand>
        <name>substrate</name>
    </ligand>
</feature>
<feature type="binding site" evidence="1">
    <location>
        <begin position="81"/>
        <end position="84"/>
    </location>
    <ligand>
        <name>substrate</name>
    </ligand>
</feature>
<feature type="binding site" evidence="1">
    <location>
        <begin position="94"/>
        <end position="97"/>
    </location>
    <ligand>
        <name>substrate</name>
    </ligand>
</feature>
<feature type="binding site" evidence="1">
    <location>
        <position position="121"/>
    </location>
    <ligand>
        <name>substrate</name>
    </ligand>
</feature>
<reference key="1">
    <citation type="submission" date="2007-04" db="EMBL/GenBank/DDBJ databases">
        <title>Complete sequence of Shewanella putrefaciens CN-32.</title>
        <authorList>
            <consortium name="US DOE Joint Genome Institute"/>
            <person name="Copeland A."/>
            <person name="Lucas S."/>
            <person name="Lapidus A."/>
            <person name="Barry K."/>
            <person name="Detter J.C."/>
            <person name="Glavina del Rio T."/>
            <person name="Hammon N."/>
            <person name="Israni S."/>
            <person name="Dalin E."/>
            <person name="Tice H."/>
            <person name="Pitluck S."/>
            <person name="Chain P."/>
            <person name="Malfatti S."/>
            <person name="Shin M."/>
            <person name="Vergez L."/>
            <person name="Schmutz J."/>
            <person name="Larimer F."/>
            <person name="Land M."/>
            <person name="Hauser L."/>
            <person name="Kyrpides N."/>
            <person name="Mikhailova N."/>
            <person name="Romine M.F."/>
            <person name="Fredrickson J."/>
            <person name="Tiedje J."/>
            <person name="Richardson P."/>
        </authorList>
    </citation>
    <scope>NUCLEOTIDE SEQUENCE [LARGE SCALE GENOMIC DNA]</scope>
    <source>
        <strain>CN-32 / ATCC BAA-453</strain>
    </source>
</reference>
<comment type="function">
    <text evidence="1">Catalyzes the reversible conversion of ribose-5-phosphate to ribulose 5-phosphate.</text>
</comment>
<comment type="catalytic activity">
    <reaction evidence="1">
        <text>aldehydo-D-ribose 5-phosphate = D-ribulose 5-phosphate</text>
        <dbReference type="Rhea" id="RHEA:14657"/>
        <dbReference type="ChEBI" id="CHEBI:58121"/>
        <dbReference type="ChEBI" id="CHEBI:58273"/>
        <dbReference type="EC" id="5.3.1.6"/>
    </reaction>
</comment>
<comment type="pathway">
    <text evidence="1">Carbohydrate degradation; pentose phosphate pathway; D-ribose 5-phosphate from D-ribulose 5-phosphate (non-oxidative stage): step 1/1.</text>
</comment>
<comment type="subunit">
    <text evidence="1">Homodimer.</text>
</comment>
<comment type="similarity">
    <text evidence="1">Belongs to the ribose 5-phosphate isomerase family.</text>
</comment>
<sequence length="220" mass="23547">MTQDEMKKAAGWAALKYVEEGSIVGVGTGSTVNHFIDALATMKDDIEGAVSSSEASTQKMKALGIPVYDLNSVDRLSVYVDGADEINDRMDMIKGGGAALTREKIVAAVAEKFICIVDNTKQVNILGEFPLPVEVIPMARSYVARQLVKLGGDPVYREGVVTDNGNVILDVYNLKILNPKELESQINEIVGVVTNGLFAKRGADVLLVGTPDGVKTFTAK</sequence>
<accession>A4Y9L3</accession>
<keyword id="KW-0413">Isomerase</keyword>
<evidence type="ECO:0000255" key="1">
    <source>
        <dbReference type="HAMAP-Rule" id="MF_00170"/>
    </source>
</evidence>
<proteinExistence type="inferred from homology"/>
<gene>
    <name evidence="1" type="primary">rpiA</name>
    <name type="ordered locus">Sputcn32_2931</name>
</gene>
<organism>
    <name type="scientific">Shewanella putrefaciens (strain CN-32 / ATCC BAA-453)</name>
    <dbReference type="NCBI Taxonomy" id="319224"/>
    <lineage>
        <taxon>Bacteria</taxon>
        <taxon>Pseudomonadati</taxon>
        <taxon>Pseudomonadota</taxon>
        <taxon>Gammaproteobacteria</taxon>
        <taxon>Alteromonadales</taxon>
        <taxon>Shewanellaceae</taxon>
        <taxon>Shewanella</taxon>
    </lineage>
</organism>
<dbReference type="EC" id="5.3.1.6" evidence="1"/>
<dbReference type="EMBL" id="CP000681">
    <property type="protein sequence ID" value="ABP76646.1"/>
    <property type="molecule type" value="Genomic_DNA"/>
</dbReference>
<dbReference type="SMR" id="A4Y9L3"/>
<dbReference type="STRING" id="319224.Sputcn32_2931"/>
<dbReference type="KEGG" id="spc:Sputcn32_2931"/>
<dbReference type="eggNOG" id="COG0120">
    <property type="taxonomic scope" value="Bacteria"/>
</dbReference>
<dbReference type="HOGENOM" id="CLU_056590_1_1_6"/>
<dbReference type="UniPathway" id="UPA00115">
    <property type="reaction ID" value="UER00412"/>
</dbReference>
<dbReference type="GO" id="GO:0005829">
    <property type="term" value="C:cytosol"/>
    <property type="evidence" value="ECO:0007669"/>
    <property type="project" value="TreeGrafter"/>
</dbReference>
<dbReference type="GO" id="GO:0004751">
    <property type="term" value="F:ribose-5-phosphate isomerase activity"/>
    <property type="evidence" value="ECO:0007669"/>
    <property type="project" value="UniProtKB-UniRule"/>
</dbReference>
<dbReference type="GO" id="GO:0006014">
    <property type="term" value="P:D-ribose metabolic process"/>
    <property type="evidence" value="ECO:0007669"/>
    <property type="project" value="TreeGrafter"/>
</dbReference>
<dbReference type="GO" id="GO:0009052">
    <property type="term" value="P:pentose-phosphate shunt, non-oxidative branch"/>
    <property type="evidence" value="ECO:0007669"/>
    <property type="project" value="UniProtKB-UniRule"/>
</dbReference>
<dbReference type="CDD" id="cd01398">
    <property type="entry name" value="RPI_A"/>
    <property type="match status" value="1"/>
</dbReference>
<dbReference type="FunFam" id="3.30.70.260:FF:000004">
    <property type="entry name" value="Ribose-5-phosphate isomerase A"/>
    <property type="match status" value="1"/>
</dbReference>
<dbReference type="FunFam" id="3.40.50.1360:FF:000001">
    <property type="entry name" value="Ribose-5-phosphate isomerase A"/>
    <property type="match status" value="1"/>
</dbReference>
<dbReference type="Gene3D" id="3.30.70.260">
    <property type="match status" value="1"/>
</dbReference>
<dbReference type="Gene3D" id="3.40.50.1360">
    <property type="match status" value="1"/>
</dbReference>
<dbReference type="HAMAP" id="MF_00170">
    <property type="entry name" value="Rib_5P_isom_A"/>
    <property type="match status" value="1"/>
</dbReference>
<dbReference type="InterPro" id="IPR037171">
    <property type="entry name" value="NagB/RpiA_transferase-like"/>
</dbReference>
<dbReference type="InterPro" id="IPR020672">
    <property type="entry name" value="Ribose5P_isomerase_typA_subgr"/>
</dbReference>
<dbReference type="InterPro" id="IPR004788">
    <property type="entry name" value="Ribose5P_isomerase_type_A"/>
</dbReference>
<dbReference type="NCBIfam" id="NF001924">
    <property type="entry name" value="PRK00702.1"/>
    <property type="match status" value="1"/>
</dbReference>
<dbReference type="NCBIfam" id="TIGR00021">
    <property type="entry name" value="rpiA"/>
    <property type="match status" value="1"/>
</dbReference>
<dbReference type="PANTHER" id="PTHR11934">
    <property type="entry name" value="RIBOSE-5-PHOSPHATE ISOMERASE"/>
    <property type="match status" value="1"/>
</dbReference>
<dbReference type="PANTHER" id="PTHR11934:SF0">
    <property type="entry name" value="RIBOSE-5-PHOSPHATE ISOMERASE"/>
    <property type="match status" value="1"/>
</dbReference>
<dbReference type="Pfam" id="PF06026">
    <property type="entry name" value="Rib_5-P_isom_A"/>
    <property type="match status" value="1"/>
</dbReference>
<dbReference type="SUPFAM" id="SSF75445">
    <property type="entry name" value="D-ribose-5-phosphate isomerase (RpiA), lid domain"/>
    <property type="match status" value="1"/>
</dbReference>
<dbReference type="SUPFAM" id="SSF100950">
    <property type="entry name" value="NagB/RpiA/CoA transferase-like"/>
    <property type="match status" value="1"/>
</dbReference>